<feature type="chain" id="PRO_1000014935" description="Chaperone protein HtpG">
    <location>
        <begin position="1"/>
        <end position="640"/>
    </location>
</feature>
<feature type="region of interest" description="A; substrate-binding" evidence="1">
    <location>
        <begin position="1"/>
        <end position="343"/>
    </location>
</feature>
<feature type="region of interest" description="B" evidence="1">
    <location>
        <begin position="344"/>
        <end position="564"/>
    </location>
</feature>
<feature type="region of interest" description="C" evidence="1">
    <location>
        <begin position="565"/>
        <end position="640"/>
    </location>
</feature>
<evidence type="ECO:0000255" key="1">
    <source>
        <dbReference type="HAMAP-Rule" id="MF_00505"/>
    </source>
</evidence>
<comment type="function">
    <text evidence="1">Molecular chaperone. Has ATPase activity.</text>
</comment>
<comment type="subunit">
    <text evidence="1">Homodimer.</text>
</comment>
<comment type="subcellular location">
    <subcellularLocation>
        <location evidence="1">Cytoplasm</location>
    </subcellularLocation>
</comment>
<comment type="similarity">
    <text evidence="1">Belongs to the heat shock protein 90 family.</text>
</comment>
<accession>Q0AHI5</accession>
<sequence length="640" mass="73212">MQTAENVEHLNFQAEAKQLLRLMIHSLYSNKEIFLRELISNASDAADKLRFEGLSDTALYESDPDLKIRIAYDKEARTITISDNGIGMSRQEVIDNIGTIAKSGTREFIDSLTGDQARDANLIGQFGVGFYSAFIVADKVTLTTRRAGLTTEHGVRWESSGEGEYTLETVEKRDRGTEVVLHLREDEDELLSSFQLRSIIRKYSDHITLPIIMKKEVWDDESKAYKISDEEETVNQASAIWARPKNEITQEQYDEFYKHVAHDFEPPLAHVHARVEGKQEYIQLLYIPAHAPFDLFDREHRHGLKLYIKRVFIMDDAEKLLPGYLRFVRGIIDSNDLPLNVSREILQESKDIDSIRAGSVKKVLGLIEDLATSDKSEDQEKFKIFWREFGQVLKEGVAEDYSNRERIAKLLRFTSTHDEQEEQTVSLDDYIARMKPEQEKIYYITADGLKAAQSSPHLEIFRKKGIEVLLLHDRIDEWLTANLNEYAGKSLQSIAKGDLDLGKLEDEVEKQEHEKEAGDFQELTAKMKEVLGELVKDVRITYRLTESPACLVADTHDMSGNLGRLLKSAGQKVPDSKPFLEINPHHPMVQRLKYEEAKFADWSHILFDQALLAEGGQLEDPASFVRRLNDLLLQNILSGK</sequence>
<reference key="1">
    <citation type="journal article" date="2007" name="Environ. Microbiol.">
        <title>Whole-genome analysis of the ammonia-oxidizing bacterium, Nitrosomonas eutropha C91: implications for niche adaptation.</title>
        <authorList>
            <person name="Stein L.Y."/>
            <person name="Arp D.J."/>
            <person name="Berube P.M."/>
            <person name="Chain P.S."/>
            <person name="Hauser L."/>
            <person name="Jetten M.S."/>
            <person name="Klotz M.G."/>
            <person name="Larimer F.W."/>
            <person name="Norton J.M."/>
            <person name="Op den Camp H.J.M."/>
            <person name="Shin M."/>
            <person name="Wei X."/>
        </authorList>
    </citation>
    <scope>NUCLEOTIDE SEQUENCE [LARGE SCALE GENOMIC DNA]</scope>
    <source>
        <strain>DSM 101675 / C91 / Nm57</strain>
    </source>
</reference>
<protein>
    <recommendedName>
        <fullName evidence="1">Chaperone protein HtpG</fullName>
    </recommendedName>
    <alternativeName>
        <fullName evidence="1">Heat shock protein HtpG</fullName>
    </alternativeName>
    <alternativeName>
        <fullName evidence="1">High temperature protein G</fullName>
    </alternativeName>
</protein>
<gene>
    <name evidence="1" type="primary">htpG</name>
    <name type="ordered locus">Neut_0937</name>
</gene>
<name>HTPG_NITEC</name>
<keyword id="KW-0067">ATP-binding</keyword>
<keyword id="KW-0143">Chaperone</keyword>
<keyword id="KW-0963">Cytoplasm</keyword>
<keyword id="KW-0547">Nucleotide-binding</keyword>
<keyword id="KW-0346">Stress response</keyword>
<organism>
    <name type="scientific">Nitrosomonas eutropha (strain DSM 101675 / C91 / Nm57)</name>
    <dbReference type="NCBI Taxonomy" id="335283"/>
    <lineage>
        <taxon>Bacteria</taxon>
        <taxon>Pseudomonadati</taxon>
        <taxon>Pseudomonadota</taxon>
        <taxon>Betaproteobacteria</taxon>
        <taxon>Nitrosomonadales</taxon>
        <taxon>Nitrosomonadaceae</taxon>
        <taxon>Nitrosomonas</taxon>
    </lineage>
</organism>
<dbReference type="EMBL" id="CP000450">
    <property type="protein sequence ID" value="ABI59197.1"/>
    <property type="molecule type" value="Genomic_DNA"/>
</dbReference>
<dbReference type="RefSeq" id="WP_011634021.1">
    <property type="nucleotide sequence ID" value="NC_008344.1"/>
</dbReference>
<dbReference type="SMR" id="Q0AHI5"/>
<dbReference type="STRING" id="335283.Neut_0937"/>
<dbReference type="KEGG" id="net:Neut_0937"/>
<dbReference type="eggNOG" id="COG0326">
    <property type="taxonomic scope" value="Bacteria"/>
</dbReference>
<dbReference type="HOGENOM" id="CLU_006684_3_0_4"/>
<dbReference type="OrthoDB" id="9802640at2"/>
<dbReference type="Proteomes" id="UP000001966">
    <property type="component" value="Chromosome"/>
</dbReference>
<dbReference type="GO" id="GO:0005737">
    <property type="term" value="C:cytoplasm"/>
    <property type="evidence" value="ECO:0007669"/>
    <property type="project" value="UniProtKB-SubCell"/>
</dbReference>
<dbReference type="GO" id="GO:0005524">
    <property type="term" value="F:ATP binding"/>
    <property type="evidence" value="ECO:0007669"/>
    <property type="project" value="UniProtKB-UniRule"/>
</dbReference>
<dbReference type="GO" id="GO:0016887">
    <property type="term" value="F:ATP hydrolysis activity"/>
    <property type="evidence" value="ECO:0007669"/>
    <property type="project" value="InterPro"/>
</dbReference>
<dbReference type="GO" id="GO:0140662">
    <property type="term" value="F:ATP-dependent protein folding chaperone"/>
    <property type="evidence" value="ECO:0007669"/>
    <property type="project" value="InterPro"/>
</dbReference>
<dbReference type="GO" id="GO:0051082">
    <property type="term" value="F:unfolded protein binding"/>
    <property type="evidence" value="ECO:0007669"/>
    <property type="project" value="UniProtKB-UniRule"/>
</dbReference>
<dbReference type="CDD" id="cd16927">
    <property type="entry name" value="HATPase_Hsp90-like"/>
    <property type="match status" value="1"/>
</dbReference>
<dbReference type="FunFam" id="3.30.230.80:FF:000002">
    <property type="entry name" value="Molecular chaperone HtpG"/>
    <property type="match status" value="1"/>
</dbReference>
<dbReference type="FunFam" id="3.30.565.10:FF:000009">
    <property type="entry name" value="Molecular chaperone HtpG"/>
    <property type="match status" value="1"/>
</dbReference>
<dbReference type="Gene3D" id="3.30.230.80">
    <property type="match status" value="1"/>
</dbReference>
<dbReference type="Gene3D" id="3.40.50.11260">
    <property type="match status" value="1"/>
</dbReference>
<dbReference type="Gene3D" id="1.20.120.790">
    <property type="entry name" value="Heat shock protein 90, C-terminal domain"/>
    <property type="match status" value="1"/>
</dbReference>
<dbReference type="Gene3D" id="3.30.565.10">
    <property type="entry name" value="Histidine kinase-like ATPase, C-terminal domain"/>
    <property type="match status" value="1"/>
</dbReference>
<dbReference type="HAMAP" id="MF_00505">
    <property type="entry name" value="HSP90"/>
    <property type="match status" value="1"/>
</dbReference>
<dbReference type="InterPro" id="IPR036890">
    <property type="entry name" value="HATPase_C_sf"/>
</dbReference>
<dbReference type="InterPro" id="IPR019805">
    <property type="entry name" value="Heat_shock_protein_90_CS"/>
</dbReference>
<dbReference type="InterPro" id="IPR037196">
    <property type="entry name" value="HSP90_C"/>
</dbReference>
<dbReference type="InterPro" id="IPR001404">
    <property type="entry name" value="Hsp90_fam"/>
</dbReference>
<dbReference type="InterPro" id="IPR020575">
    <property type="entry name" value="Hsp90_N"/>
</dbReference>
<dbReference type="InterPro" id="IPR020568">
    <property type="entry name" value="Ribosomal_Su5_D2-typ_SF"/>
</dbReference>
<dbReference type="NCBIfam" id="NF003555">
    <property type="entry name" value="PRK05218.1"/>
    <property type="match status" value="1"/>
</dbReference>
<dbReference type="PANTHER" id="PTHR11528">
    <property type="entry name" value="HEAT SHOCK PROTEIN 90 FAMILY MEMBER"/>
    <property type="match status" value="1"/>
</dbReference>
<dbReference type="Pfam" id="PF13589">
    <property type="entry name" value="HATPase_c_3"/>
    <property type="match status" value="1"/>
</dbReference>
<dbReference type="Pfam" id="PF00183">
    <property type="entry name" value="HSP90"/>
    <property type="match status" value="1"/>
</dbReference>
<dbReference type="PIRSF" id="PIRSF002583">
    <property type="entry name" value="Hsp90"/>
    <property type="match status" value="1"/>
</dbReference>
<dbReference type="PRINTS" id="PR00775">
    <property type="entry name" value="HEATSHOCK90"/>
</dbReference>
<dbReference type="SMART" id="SM00387">
    <property type="entry name" value="HATPase_c"/>
    <property type="match status" value="1"/>
</dbReference>
<dbReference type="SUPFAM" id="SSF55874">
    <property type="entry name" value="ATPase domain of HSP90 chaperone/DNA topoisomerase II/histidine kinase"/>
    <property type="match status" value="1"/>
</dbReference>
<dbReference type="SUPFAM" id="SSF110942">
    <property type="entry name" value="HSP90 C-terminal domain"/>
    <property type="match status" value="1"/>
</dbReference>
<dbReference type="SUPFAM" id="SSF54211">
    <property type="entry name" value="Ribosomal protein S5 domain 2-like"/>
    <property type="match status" value="1"/>
</dbReference>
<dbReference type="PROSITE" id="PS00298">
    <property type="entry name" value="HSP90"/>
    <property type="match status" value="1"/>
</dbReference>
<proteinExistence type="inferred from homology"/>